<keyword id="KW-0004">4Fe-4S</keyword>
<keyword id="KW-0963">Cytoplasm</keyword>
<keyword id="KW-0408">Iron</keyword>
<keyword id="KW-0411">Iron-sulfur</keyword>
<keyword id="KW-0479">Metal-binding</keyword>
<keyword id="KW-0949">S-adenosyl-L-methionine</keyword>
<keyword id="KW-0808">Transferase</keyword>
<reference key="1">
    <citation type="submission" date="2008-06" db="EMBL/GenBank/DDBJ databases">
        <title>Complete sequence of Stenotrophomonas maltophilia R551-3.</title>
        <authorList>
            <consortium name="US DOE Joint Genome Institute"/>
            <person name="Lucas S."/>
            <person name="Copeland A."/>
            <person name="Lapidus A."/>
            <person name="Glavina del Rio T."/>
            <person name="Dalin E."/>
            <person name="Tice H."/>
            <person name="Pitluck S."/>
            <person name="Chain P."/>
            <person name="Malfatti S."/>
            <person name="Shin M."/>
            <person name="Vergez L."/>
            <person name="Lang D."/>
            <person name="Schmutz J."/>
            <person name="Larimer F."/>
            <person name="Land M."/>
            <person name="Hauser L."/>
            <person name="Kyrpides N."/>
            <person name="Mikhailova N."/>
            <person name="Taghavi S."/>
            <person name="Monchy S."/>
            <person name="Newman L."/>
            <person name="Vangronsveld J."/>
            <person name="van der Lelie D."/>
            <person name="Richardson P."/>
        </authorList>
    </citation>
    <scope>NUCLEOTIDE SEQUENCE [LARGE SCALE GENOMIC DNA]</scope>
    <source>
        <strain>R551-3</strain>
    </source>
</reference>
<sequence length="453" mass="50258">MSQLNPKVGFVSLGCPKALVDSERILTQLRSEGYDIVPSYDSADVVVVNTCGFIDSAVTESLDAIGEAMNQNGKVIVTGCLGKRPEQIREAYPNVLAVSGPQDYQSVMEAVHEALPPKHDPFVDLVPDYGIKLTPRHYAYLKISEGCNHKCSFCIIPSMRGKLVSRPVDEVLREAERLVRGGVRELLVVSQDTSAYGVDVKYAEKMWRDKAYQTRLKALCEGLSELDAWVRMHYVYPYPHVDEVVPLMAENRILPYLDIPFQHASPRILRLMKRPGAVEKTLERVQNWRRIAPDITVRSTFIVGFPGETEAEFEELLSFLDEAQLDRVGAFAYSPVEGATANDLPDAVPEEVKQERLARFMEKQAQISAARLEAKIGTVQQCLVDAIEGDIAVARSKADAPEIDGLVHIQNADQVALRVGEFVDVEITESDDHDLYGDALPAAARPALDLKVL</sequence>
<proteinExistence type="inferred from homology"/>
<evidence type="ECO:0000255" key="1">
    <source>
        <dbReference type="HAMAP-Rule" id="MF_01865"/>
    </source>
</evidence>
<evidence type="ECO:0000255" key="2">
    <source>
        <dbReference type="PROSITE-ProRule" id="PRU01266"/>
    </source>
</evidence>
<name>RIMO_STRM5</name>
<gene>
    <name evidence="1" type="primary">rimO</name>
    <name type="ordered locus">Smal_2865</name>
</gene>
<dbReference type="EC" id="2.8.4.4" evidence="1"/>
<dbReference type="EMBL" id="CP001111">
    <property type="protein sequence ID" value="ACF52565.1"/>
    <property type="molecule type" value="Genomic_DNA"/>
</dbReference>
<dbReference type="RefSeq" id="WP_012511733.1">
    <property type="nucleotide sequence ID" value="NC_011071.1"/>
</dbReference>
<dbReference type="SMR" id="B4SQX0"/>
<dbReference type="STRING" id="391008.Smal_2865"/>
<dbReference type="KEGG" id="smt:Smal_2865"/>
<dbReference type="eggNOG" id="COG0621">
    <property type="taxonomic scope" value="Bacteria"/>
</dbReference>
<dbReference type="HOGENOM" id="CLU_018697_0_0_6"/>
<dbReference type="OrthoDB" id="9805215at2"/>
<dbReference type="Proteomes" id="UP000001867">
    <property type="component" value="Chromosome"/>
</dbReference>
<dbReference type="GO" id="GO:0005829">
    <property type="term" value="C:cytosol"/>
    <property type="evidence" value="ECO:0007669"/>
    <property type="project" value="TreeGrafter"/>
</dbReference>
<dbReference type="GO" id="GO:0051539">
    <property type="term" value="F:4 iron, 4 sulfur cluster binding"/>
    <property type="evidence" value="ECO:0007669"/>
    <property type="project" value="UniProtKB-UniRule"/>
</dbReference>
<dbReference type="GO" id="GO:0035599">
    <property type="term" value="F:aspartic acid methylthiotransferase activity"/>
    <property type="evidence" value="ECO:0007669"/>
    <property type="project" value="TreeGrafter"/>
</dbReference>
<dbReference type="GO" id="GO:0046872">
    <property type="term" value="F:metal ion binding"/>
    <property type="evidence" value="ECO:0007669"/>
    <property type="project" value="UniProtKB-KW"/>
</dbReference>
<dbReference type="GO" id="GO:0103039">
    <property type="term" value="F:protein methylthiotransferase activity"/>
    <property type="evidence" value="ECO:0007669"/>
    <property type="project" value="UniProtKB-EC"/>
</dbReference>
<dbReference type="GO" id="GO:0006400">
    <property type="term" value="P:tRNA modification"/>
    <property type="evidence" value="ECO:0007669"/>
    <property type="project" value="InterPro"/>
</dbReference>
<dbReference type="CDD" id="cd01335">
    <property type="entry name" value="Radical_SAM"/>
    <property type="match status" value="1"/>
</dbReference>
<dbReference type="FunFam" id="2.40.50.140:FF:000210">
    <property type="entry name" value="Ribosomal protein S12 methylthiotransferase RimO"/>
    <property type="match status" value="1"/>
</dbReference>
<dbReference type="FunFam" id="3.40.50.12160:FF:000002">
    <property type="entry name" value="Ribosomal protein S12 methylthiotransferase RimO"/>
    <property type="match status" value="1"/>
</dbReference>
<dbReference type="FunFam" id="3.80.30.20:FF:000001">
    <property type="entry name" value="tRNA-2-methylthio-N(6)-dimethylallyladenosine synthase 2"/>
    <property type="match status" value="1"/>
</dbReference>
<dbReference type="Gene3D" id="3.40.50.12160">
    <property type="entry name" value="Methylthiotransferase, N-terminal domain"/>
    <property type="match status" value="1"/>
</dbReference>
<dbReference type="Gene3D" id="2.40.50.140">
    <property type="entry name" value="Nucleic acid-binding proteins"/>
    <property type="match status" value="1"/>
</dbReference>
<dbReference type="Gene3D" id="3.80.30.20">
    <property type="entry name" value="tm_1862 like domain"/>
    <property type="match status" value="1"/>
</dbReference>
<dbReference type="HAMAP" id="MF_01865">
    <property type="entry name" value="MTTase_RimO"/>
    <property type="match status" value="1"/>
</dbReference>
<dbReference type="InterPro" id="IPR006638">
    <property type="entry name" value="Elp3/MiaA/NifB-like_rSAM"/>
</dbReference>
<dbReference type="InterPro" id="IPR005839">
    <property type="entry name" value="Methylthiotransferase"/>
</dbReference>
<dbReference type="InterPro" id="IPR020612">
    <property type="entry name" value="Methylthiotransferase_CS"/>
</dbReference>
<dbReference type="InterPro" id="IPR013848">
    <property type="entry name" value="Methylthiotransferase_N"/>
</dbReference>
<dbReference type="InterPro" id="IPR038135">
    <property type="entry name" value="Methylthiotransferase_N_sf"/>
</dbReference>
<dbReference type="InterPro" id="IPR012340">
    <property type="entry name" value="NA-bd_OB-fold"/>
</dbReference>
<dbReference type="InterPro" id="IPR005840">
    <property type="entry name" value="Ribosomal_uS12_MeSTrfase_RimO"/>
</dbReference>
<dbReference type="InterPro" id="IPR007197">
    <property type="entry name" value="rSAM"/>
</dbReference>
<dbReference type="InterPro" id="IPR023404">
    <property type="entry name" value="rSAM_horseshoe"/>
</dbReference>
<dbReference type="InterPro" id="IPR002792">
    <property type="entry name" value="TRAM_dom"/>
</dbReference>
<dbReference type="NCBIfam" id="TIGR01125">
    <property type="entry name" value="30S ribosomal protein S12 methylthiotransferase RimO"/>
    <property type="match status" value="1"/>
</dbReference>
<dbReference type="NCBIfam" id="TIGR00089">
    <property type="entry name" value="MiaB/RimO family radical SAM methylthiotransferase"/>
    <property type="match status" value="1"/>
</dbReference>
<dbReference type="PANTHER" id="PTHR43837">
    <property type="entry name" value="RIBOSOMAL PROTEIN S12 METHYLTHIOTRANSFERASE RIMO"/>
    <property type="match status" value="1"/>
</dbReference>
<dbReference type="PANTHER" id="PTHR43837:SF1">
    <property type="entry name" value="RIBOSOMAL PROTEIN US12 METHYLTHIOTRANSFERASE RIMO"/>
    <property type="match status" value="1"/>
</dbReference>
<dbReference type="Pfam" id="PF04055">
    <property type="entry name" value="Radical_SAM"/>
    <property type="match status" value="1"/>
</dbReference>
<dbReference type="Pfam" id="PF18693">
    <property type="entry name" value="TRAM_2"/>
    <property type="match status" value="1"/>
</dbReference>
<dbReference type="Pfam" id="PF00919">
    <property type="entry name" value="UPF0004"/>
    <property type="match status" value="1"/>
</dbReference>
<dbReference type="SFLD" id="SFLDG01082">
    <property type="entry name" value="B12-binding_domain_containing"/>
    <property type="match status" value="1"/>
</dbReference>
<dbReference type="SFLD" id="SFLDG01061">
    <property type="entry name" value="methylthiotransferase"/>
    <property type="match status" value="1"/>
</dbReference>
<dbReference type="SFLD" id="SFLDF00274">
    <property type="entry name" value="ribosomal_protein_S12_methylth"/>
    <property type="match status" value="1"/>
</dbReference>
<dbReference type="SMART" id="SM00729">
    <property type="entry name" value="Elp3"/>
    <property type="match status" value="1"/>
</dbReference>
<dbReference type="SUPFAM" id="SSF102114">
    <property type="entry name" value="Radical SAM enzymes"/>
    <property type="match status" value="1"/>
</dbReference>
<dbReference type="PROSITE" id="PS51449">
    <property type="entry name" value="MTTASE_N"/>
    <property type="match status" value="1"/>
</dbReference>
<dbReference type="PROSITE" id="PS01278">
    <property type="entry name" value="MTTASE_RADICAL"/>
    <property type="match status" value="1"/>
</dbReference>
<dbReference type="PROSITE" id="PS51918">
    <property type="entry name" value="RADICAL_SAM"/>
    <property type="match status" value="1"/>
</dbReference>
<dbReference type="PROSITE" id="PS50926">
    <property type="entry name" value="TRAM"/>
    <property type="match status" value="1"/>
</dbReference>
<accession>B4SQX0</accession>
<feature type="chain" id="PRO_0000375021" description="Ribosomal protein uS12 methylthiotransferase RimO">
    <location>
        <begin position="1"/>
        <end position="453"/>
    </location>
</feature>
<feature type="domain" description="MTTase N-terminal" evidence="1">
    <location>
        <begin position="6"/>
        <end position="116"/>
    </location>
</feature>
<feature type="domain" description="Radical SAM core" evidence="2">
    <location>
        <begin position="133"/>
        <end position="370"/>
    </location>
</feature>
<feature type="domain" description="TRAM" evidence="1">
    <location>
        <begin position="373"/>
        <end position="441"/>
    </location>
</feature>
<feature type="binding site" evidence="1">
    <location>
        <position position="15"/>
    </location>
    <ligand>
        <name>[4Fe-4S] cluster</name>
        <dbReference type="ChEBI" id="CHEBI:49883"/>
        <label>1</label>
    </ligand>
</feature>
<feature type="binding site" evidence="1">
    <location>
        <position position="51"/>
    </location>
    <ligand>
        <name>[4Fe-4S] cluster</name>
        <dbReference type="ChEBI" id="CHEBI:49883"/>
        <label>1</label>
    </ligand>
</feature>
<feature type="binding site" evidence="1">
    <location>
        <position position="80"/>
    </location>
    <ligand>
        <name>[4Fe-4S] cluster</name>
        <dbReference type="ChEBI" id="CHEBI:49883"/>
        <label>1</label>
    </ligand>
</feature>
<feature type="binding site" evidence="1">
    <location>
        <position position="147"/>
    </location>
    <ligand>
        <name>[4Fe-4S] cluster</name>
        <dbReference type="ChEBI" id="CHEBI:49883"/>
        <label>2</label>
        <note>4Fe-4S-S-AdoMet</note>
    </ligand>
</feature>
<feature type="binding site" evidence="1">
    <location>
        <position position="151"/>
    </location>
    <ligand>
        <name>[4Fe-4S] cluster</name>
        <dbReference type="ChEBI" id="CHEBI:49883"/>
        <label>2</label>
        <note>4Fe-4S-S-AdoMet</note>
    </ligand>
</feature>
<feature type="binding site" evidence="1">
    <location>
        <position position="154"/>
    </location>
    <ligand>
        <name>[4Fe-4S] cluster</name>
        <dbReference type="ChEBI" id="CHEBI:49883"/>
        <label>2</label>
        <note>4Fe-4S-S-AdoMet</note>
    </ligand>
</feature>
<protein>
    <recommendedName>
        <fullName evidence="1">Ribosomal protein uS12 methylthiotransferase RimO</fullName>
        <shortName evidence="1">uS12 MTTase</shortName>
        <shortName evidence="1">uS12 methylthiotransferase</shortName>
        <ecNumber evidence="1">2.8.4.4</ecNumber>
    </recommendedName>
    <alternativeName>
        <fullName evidence="1">Ribosomal protein uS12 (aspartate-C(3))-methylthiotransferase</fullName>
    </alternativeName>
    <alternativeName>
        <fullName evidence="1">Ribosome maturation factor RimO</fullName>
    </alternativeName>
</protein>
<comment type="function">
    <text evidence="1">Catalyzes the methylthiolation of an aspartic acid residue of ribosomal protein uS12.</text>
</comment>
<comment type="catalytic activity">
    <reaction evidence="1">
        <text>L-aspartate(89)-[ribosomal protein uS12]-hydrogen + (sulfur carrier)-SH + AH2 + 2 S-adenosyl-L-methionine = 3-methylsulfanyl-L-aspartate(89)-[ribosomal protein uS12]-hydrogen + (sulfur carrier)-H + 5'-deoxyadenosine + L-methionine + A + S-adenosyl-L-homocysteine + 2 H(+)</text>
        <dbReference type="Rhea" id="RHEA:37087"/>
        <dbReference type="Rhea" id="RHEA-COMP:10460"/>
        <dbReference type="Rhea" id="RHEA-COMP:10461"/>
        <dbReference type="Rhea" id="RHEA-COMP:14737"/>
        <dbReference type="Rhea" id="RHEA-COMP:14739"/>
        <dbReference type="ChEBI" id="CHEBI:13193"/>
        <dbReference type="ChEBI" id="CHEBI:15378"/>
        <dbReference type="ChEBI" id="CHEBI:17319"/>
        <dbReference type="ChEBI" id="CHEBI:17499"/>
        <dbReference type="ChEBI" id="CHEBI:29917"/>
        <dbReference type="ChEBI" id="CHEBI:29961"/>
        <dbReference type="ChEBI" id="CHEBI:57844"/>
        <dbReference type="ChEBI" id="CHEBI:57856"/>
        <dbReference type="ChEBI" id="CHEBI:59789"/>
        <dbReference type="ChEBI" id="CHEBI:64428"/>
        <dbReference type="ChEBI" id="CHEBI:73599"/>
        <dbReference type="EC" id="2.8.4.4"/>
    </reaction>
</comment>
<comment type="cofactor">
    <cofactor evidence="1">
        <name>[4Fe-4S] cluster</name>
        <dbReference type="ChEBI" id="CHEBI:49883"/>
    </cofactor>
    <text evidence="1">Binds 2 [4Fe-4S] clusters. One cluster is coordinated with 3 cysteines and an exchangeable S-adenosyl-L-methionine.</text>
</comment>
<comment type="subcellular location">
    <subcellularLocation>
        <location evidence="1">Cytoplasm</location>
    </subcellularLocation>
</comment>
<comment type="similarity">
    <text evidence="1">Belongs to the methylthiotransferase family. RimO subfamily.</text>
</comment>
<organism>
    <name type="scientific">Stenotrophomonas maltophilia (strain R551-3)</name>
    <dbReference type="NCBI Taxonomy" id="391008"/>
    <lineage>
        <taxon>Bacteria</taxon>
        <taxon>Pseudomonadati</taxon>
        <taxon>Pseudomonadota</taxon>
        <taxon>Gammaproteobacteria</taxon>
        <taxon>Lysobacterales</taxon>
        <taxon>Lysobacteraceae</taxon>
        <taxon>Stenotrophomonas</taxon>
        <taxon>Stenotrophomonas maltophilia group</taxon>
    </lineage>
</organism>